<sequence>MASADEKVVEEKASVISSLLDKAKGFFAEKLANIPTPEATVDDVDFKGVTRDGVDYHAKVSVKNPYSQSIPICQISYILKSATRTIASGTIPDPGSLVGSGTTVLDVPVKVAYSIAVSLMKDMCTDWDIDYQLDIGLTFDIPVVGDITIPVSTQGEIKLPSLRDFF</sequence>
<dbReference type="EMBL" id="AC005397">
    <property type="protein sequence ID" value="AAC62908.1"/>
    <property type="molecule type" value="Genomic_DNA"/>
</dbReference>
<dbReference type="EMBL" id="CP002685">
    <property type="protein sequence ID" value="AEC10648.1"/>
    <property type="molecule type" value="Genomic_DNA"/>
</dbReference>
<dbReference type="EMBL" id="BT005673">
    <property type="protein sequence ID" value="AAO64093.1"/>
    <property type="molecule type" value="mRNA"/>
</dbReference>
<dbReference type="EMBL" id="BT004206">
    <property type="protein sequence ID" value="AAO42224.1"/>
    <property type="molecule type" value="mRNA"/>
</dbReference>
<dbReference type="EMBL" id="AY086763">
    <property type="protein sequence ID" value="AAM63814.1"/>
    <property type="molecule type" value="mRNA"/>
</dbReference>
<dbReference type="PIR" id="B84899">
    <property type="entry name" value="B84899"/>
</dbReference>
<dbReference type="RefSeq" id="NP_182137.1">
    <property type="nucleotide sequence ID" value="NM_130176.3"/>
</dbReference>
<dbReference type="PDB" id="1YYC">
    <property type="method" value="NMR"/>
    <property type="chains" value="A=2-166"/>
</dbReference>
<dbReference type="PDBsum" id="1YYC"/>
<dbReference type="BMRB" id="O82355"/>
<dbReference type="SMR" id="O82355"/>
<dbReference type="FunCoup" id="O82355">
    <property type="interactions" value="52"/>
</dbReference>
<dbReference type="STRING" id="3702.O82355"/>
<dbReference type="PaxDb" id="3702-AT2G46140.1"/>
<dbReference type="ProteomicsDB" id="230208"/>
<dbReference type="DNASU" id="819221"/>
<dbReference type="EnsemblPlants" id="AT2G46140.1">
    <property type="protein sequence ID" value="AT2G46140.1"/>
    <property type="gene ID" value="AT2G46140"/>
</dbReference>
<dbReference type="GeneID" id="819221"/>
<dbReference type="Gramene" id="AT2G46140.1">
    <property type="protein sequence ID" value="AT2G46140.1"/>
    <property type="gene ID" value="AT2G46140"/>
</dbReference>
<dbReference type="KEGG" id="ath:AT2G46140"/>
<dbReference type="Araport" id="AT2G46140"/>
<dbReference type="TAIR" id="AT2G46140">
    <property type="gene designation" value="LEA27"/>
</dbReference>
<dbReference type="eggNOG" id="ENOG502RZ6Q">
    <property type="taxonomic scope" value="Eukaryota"/>
</dbReference>
<dbReference type="HOGENOM" id="CLU_118295_0_0_1"/>
<dbReference type="InParanoid" id="O82355"/>
<dbReference type="OMA" id="CLDWDID"/>
<dbReference type="OrthoDB" id="588983at2759"/>
<dbReference type="PhylomeDB" id="O82355"/>
<dbReference type="EvolutionaryTrace" id="O82355"/>
<dbReference type="PRO" id="PR:O82355"/>
<dbReference type="Proteomes" id="UP000006548">
    <property type="component" value="Chromosome 2"/>
</dbReference>
<dbReference type="ExpressionAtlas" id="O82355">
    <property type="expression patterns" value="baseline and differential"/>
</dbReference>
<dbReference type="GO" id="GO:0005829">
    <property type="term" value="C:cytosol"/>
    <property type="evidence" value="ECO:0007005"/>
    <property type="project" value="TAIR"/>
</dbReference>
<dbReference type="GO" id="GO:0005886">
    <property type="term" value="C:plasma membrane"/>
    <property type="evidence" value="ECO:0007005"/>
    <property type="project" value="TAIR"/>
</dbReference>
<dbReference type="GO" id="GO:0009269">
    <property type="term" value="P:response to desiccation"/>
    <property type="evidence" value="ECO:0007669"/>
    <property type="project" value="InterPro"/>
</dbReference>
<dbReference type="FunFam" id="2.60.40.1820:FF:000001">
    <property type="entry name" value="Desiccation protectant protein Lea14-like"/>
    <property type="match status" value="1"/>
</dbReference>
<dbReference type="Gene3D" id="1.20.5.170">
    <property type="match status" value="1"/>
</dbReference>
<dbReference type="Gene3D" id="2.60.40.1820">
    <property type="match status" value="1"/>
</dbReference>
<dbReference type="InterPro" id="IPR045043">
    <property type="entry name" value="Lea14-like"/>
</dbReference>
<dbReference type="InterPro" id="IPR004864">
    <property type="entry name" value="LEA_2"/>
</dbReference>
<dbReference type="InterPro" id="IPR013990">
    <property type="entry name" value="WHy-dom"/>
</dbReference>
<dbReference type="PANTHER" id="PTHR31459">
    <property type="match status" value="1"/>
</dbReference>
<dbReference type="PANTHER" id="PTHR31459:SF18">
    <property type="entry name" value="WATER STRESS AND HYPERSENSITIVE RESPONSE DOMAIN-CONTAINING PROTEIN"/>
    <property type="match status" value="1"/>
</dbReference>
<dbReference type="Pfam" id="PF03168">
    <property type="entry name" value="LEA_2"/>
    <property type="match status" value="1"/>
</dbReference>
<dbReference type="SMART" id="SM00769">
    <property type="entry name" value="WHy"/>
    <property type="match status" value="1"/>
</dbReference>
<dbReference type="SUPFAM" id="SSF117070">
    <property type="entry name" value="LEA14-like"/>
    <property type="match status" value="1"/>
</dbReference>
<comment type="similarity">
    <text evidence="1">Belongs to the LEA type 2 family.</text>
</comment>
<keyword id="KW-0002">3D-structure</keyword>
<keyword id="KW-1185">Reference proteome</keyword>
<evidence type="ECO:0000305" key="1"/>
<evidence type="ECO:0007829" key="2">
    <source>
        <dbReference type="PDB" id="1YYC"/>
    </source>
</evidence>
<accession>O82355</accession>
<accession>Q8LC67</accession>
<organism>
    <name type="scientific">Arabidopsis thaliana</name>
    <name type="common">Mouse-ear cress</name>
    <dbReference type="NCBI Taxonomy" id="3702"/>
    <lineage>
        <taxon>Eukaryota</taxon>
        <taxon>Viridiplantae</taxon>
        <taxon>Streptophyta</taxon>
        <taxon>Embryophyta</taxon>
        <taxon>Tracheophyta</taxon>
        <taxon>Spermatophyta</taxon>
        <taxon>Magnoliopsida</taxon>
        <taxon>eudicotyledons</taxon>
        <taxon>Gunneridae</taxon>
        <taxon>Pentapetalae</taxon>
        <taxon>rosids</taxon>
        <taxon>malvids</taxon>
        <taxon>Brassicales</taxon>
        <taxon>Brassicaceae</taxon>
        <taxon>Camelineae</taxon>
        <taxon>Arabidopsis</taxon>
    </lineage>
</organism>
<gene>
    <name type="ordered locus">At2g46140</name>
    <name type="ORF">T3F17.21</name>
</gene>
<protein>
    <recommendedName>
        <fullName>Desiccation-related protein At2g46140</fullName>
    </recommendedName>
    <alternativeName>
        <fullName>LEA type-2 family protein At2g46140</fullName>
    </alternativeName>
</protein>
<feature type="chain" id="PRO_0000250541" description="Desiccation-related protein At2g46140">
    <location>
        <begin position="1"/>
        <end position="166"/>
    </location>
</feature>
<feature type="sequence conflict" description="In Ref. 4; AAM63814." evidence="1" ref="4">
    <original>N</original>
    <variation>D</variation>
    <location>
        <position position="33"/>
    </location>
</feature>
<feature type="helix" evidence="2">
    <location>
        <begin position="4"/>
        <end position="29"/>
    </location>
</feature>
<feature type="turn" evidence="2">
    <location>
        <begin position="30"/>
        <end position="33"/>
    </location>
</feature>
<feature type="strand" evidence="2">
    <location>
        <begin position="38"/>
        <end position="49"/>
    </location>
</feature>
<feature type="strand" evidence="2">
    <location>
        <begin position="51"/>
        <end position="64"/>
    </location>
</feature>
<feature type="strand" evidence="2">
    <location>
        <begin position="66"/>
        <end position="68"/>
    </location>
</feature>
<feature type="strand" evidence="2">
    <location>
        <begin position="74"/>
        <end position="84"/>
    </location>
</feature>
<feature type="strand" evidence="2">
    <location>
        <begin position="86"/>
        <end position="92"/>
    </location>
</feature>
<feature type="strand" evidence="2">
    <location>
        <begin position="99"/>
        <end position="112"/>
    </location>
</feature>
<feature type="helix" evidence="2">
    <location>
        <begin position="113"/>
        <end position="118"/>
    </location>
</feature>
<feature type="strand" evidence="2">
    <location>
        <begin position="125"/>
        <end position="129"/>
    </location>
</feature>
<feature type="strand" evidence="2">
    <location>
        <begin position="131"/>
        <end position="140"/>
    </location>
</feature>
<feature type="strand" evidence="2">
    <location>
        <begin position="144"/>
        <end position="154"/>
    </location>
</feature>
<feature type="strand" evidence="2">
    <location>
        <begin position="157"/>
        <end position="159"/>
    </location>
</feature>
<name>LEA2R_ARATH</name>
<proteinExistence type="evidence at protein level"/>
<reference key="1">
    <citation type="journal article" date="1999" name="Nature">
        <title>Sequence and analysis of chromosome 2 of the plant Arabidopsis thaliana.</title>
        <authorList>
            <person name="Lin X."/>
            <person name="Kaul S."/>
            <person name="Rounsley S.D."/>
            <person name="Shea T.P."/>
            <person name="Benito M.-I."/>
            <person name="Town C.D."/>
            <person name="Fujii C.Y."/>
            <person name="Mason T.M."/>
            <person name="Bowman C.L."/>
            <person name="Barnstead M.E."/>
            <person name="Feldblyum T.V."/>
            <person name="Buell C.R."/>
            <person name="Ketchum K.A."/>
            <person name="Lee J.J."/>
            <person name="Ronning C.M."/>
            <person name="Koo H.L."/>
            <person name="Moffat K.S."/>
            <person name="Cronin L.A."/>
            <person name="Shen M."/>
            <person name="Pai G."/>
            <person name="Van Aken S."/>
            <person name="Umayam L."/>
            <person name="Tallon L.J."/>
            <person name="Gill J.E."/>
            <person name="Adams M.D."/>
            <person name="Carrera A.J."/>
            <person name="Creasy T.H."/>
            <person name="Goodman H.M."/>
            <person name="Somerville C.R."/>
            <person name="Copenhaver G.P."/>
            <person name="Preuss D."/>
            <person name="Nierman W.C."/>
            <person name="White O."/>
            <person name="Eisen J.A."/>
            <person name="Salzberg S.L."/>
            <person name="Fraser C.M."/>
            <person name="Venter J.C."/>
        </authorList>
    </citation>
    <scope>NUCLEOTIDE SEQUENCE [LARGE SCALE GENOMIC DNA]</scope>
    <source>
        <strain>cv. Columbia</strain>
    </source>
</reference>
<reference key="2">
    <citation type="journal article" date="2017" name="Plant J.">
        <title>Araport11: a complete reannotation of the Arabidopsis thaliana reference genome.</title>
        <authorList>
            <person name="Cheng C.Y."/>
            <person name="Krishnakumar V."/>
            <person name="Chan A.P."/>
            <person name="Thibaud-Nissen F."/>
            <person name="Schobel S."/>
            <person name="Town C.D."/>
        </authorList>
    </citation>
    <scope>GENOME REANNOTATION</scope>
    <source>
        <strain>cv. Columbia</strain>
    </source>
</reference>
<reference key="3">
    <citation type="journal article" date="2003" name="Science">
        <title>Empirical analysis of transcriptional activity in the Arabidopsis genome.</title>
        <authorList>
            <person name="Yamada K."/>
            <person name="Lim J."/>
            <person name="Dale J.M."/>
            <person name="Chen H."/>
            <person name="Shinn P."/>
            <person name="Palm C.J."/>
            <person name="Southwick A.M."/>
            <person name="Wu H.C."/>
            <person name="Kim C.J."/>
            <person name="Nguyen M."/>
            <person name="Pham P.K."/>
            <person name="Cheuk R.F."/>
            <person name="Karlin-Newmann G."/>
            <person name="Liu S.X."/>
            <person name="Lam B."/>
            <person name="Sakano H."/>
            <person name="Wu T."/>
            <person name="Yu G."/>
            <person name="Miranda M."/>
            <person name="Quach H.L."/>
            <person name="Tripp M."/>
            <person name="Chang C.H."/>
            <person name="Lee J.M."/>
            <person name="Toriumi M.J."/>
            <person name="Chan M.M."/>
            <person name="Tang C.C."/>
            <person name="Onodera C.S."/>
            <person name="Deng J.M."/>
            <person name="Akiyama K."/>
            <person name="Ansari Y."/>
            <person name="Arakawa T."/>
            <person name="Banh J."/>
            <person name="Banno F."/>
            <person name="Bowser L."/>
            <person name="Brooks S.Y."/>
            <person name="Carninci P."/>
            <person name="Chao Q."/>
            <person name="Choy N."/>
            <person name="Enju A."/>
            <person name="Goldsmith A.D."/>
            <person name="Gurjal M."/>
            <person name="Hansen N.F."/>
            <person name="Hayashizaki Y."/>
            <person name="Johnson-Hopson C."/>
            <person name="Hsuan V.W."/>
            <person name="Iida K."/>
            <person name="Karnes M."/>
            <person name="Khan S."/>
            <person name="Koesema E."/>
            <person name="Ishida J."/>
            <person name="Jiang P.X."/>
            <person name="Jones T."/>
            <person name="Kawai J."/>
            <person name="Kamiya A."/>
            <person name="Meyers C."/>
            <person name="Nakajima M."/>
            <person name="Narusaka M."/>
            <person name="Seki M."/>
            <person name="Sakurai T."/>
            <person name="Satou M."/>
            <person name="Tamse R."/>
            <person name="Vaysberg M."/>
            <person name="Wallender E.K."/>
            <person name="Wong C."/>
            <person name="Yamamura Y."/>
            <person name="Yuan S."/>
            <person name="Shinozaki K."/>
            <person name="Davis R.W."/>
            <person name="Theologis A."/>
            <person name="Ecker J.R."/>
        </authorList>
    </citation>
    <scope>NUCLEOTIDE SEQUENCE [LARGE SCALE MRNA]</scope>
    <source>
        <strain>cv. Columbia</strain>
    </source>
</reference>
<reference key="4">
    <citation type="submission" date="2002-03" db="EMBL/GenBank/DDBJ databases">
        <title>Full-length cDNA from Arabidopsis thaliana.</title>
        <authorList>
            <person name="Brover V.V."/>
            <person name="Troukhan M.E."/>
            <person name="Alexandrov N.A."/>
            <person name="Lu Y.-P."/>
            <person name="Flavell R.B."/>
            <person name="Feldmann K.A."/>
        </authorList>
    </citation>
    <scope>NUCLEOTIDE SEQUENCE [LARGE SCALE MRNA]</scope>
</reference>
<reference key="5">
    <citation type="submission" date="2005-03" db="PDB data bank">
        <title>Solution structure of a putative late embryogenesis abundant (LEA) protein At2g46140.</title>
        <authorList>
            <consortium name="Center for eukaryotic structural genomics (CESG)"/>
        </authorList>
    </citation>
    <scope>STRUCTURE BY NMR OF 2-166</scope>
</reference>